<reference key="1">
    <citation type="journal article" date="2008" name="Chem. Biol. Interact.">
        <title>Extending the Bacillus cereus group genomics to putative food-borne pathogens of different toxicity.</title>
        <authorList>
            <person name="Lapidus A."/>
            <person name="Goltsman E."/>
            <person name="Auger S."/>
            <person name="Galleron N."/>
            <person name="Segurens B."/>
            <person name="Dossat C."/>
            <person name="Land M.L."/>
            <person name="Broussolle V."/>
            <person name="Brillard J."/>
            <person name="Guinebretiere M.-H."/>
            <person name="Sanchis V."/>
            <person name="Nguen-the C."/>
            <person name="Lereclus D."/>
            <person name="Richardson P."/>
            <person name="Wincker P."/>
            <person name="Weissenbach J."/>
            <person name="Ehrlich S.D."/>
            <person name="Sorokin A."/>
        </authorList>
    </citation>
    <scope>NUCLEOTIDE SEQUENCE [LARGE SCALE GENOMIC DNA]</scope>
    <source>
        <strain>DSM 22905 / CIP 110041 / 391-98 / NVH 391-98</strain>
    </source>
</reference>
<accession>A7GRF7</accession>
<comment type="similarity">
    <text evidence="1">Belongs to the universal ribosomal protein uS2 family.</text>
</comment>
<feature type="chain" id="PRO_1000078868" description="Small ribosomal subunit protein uS2">
    <location>
        <begin position="1"/>
        <end position="233"/>
    </location>
</feature>
<proteinExistence type="inferred from homology"/>
<organism>
    <name type="scientific">Bacillus cytotoxicus (strain DSM 22905 / CIP 110041 / 391-98 / NVH 391-98)</name>
    <dbReference type="NCBI Taxonomy" id="315749"/>
    <lineage>
        <taxon>Bacteria</taxon>
        <taxon>Bacillati</taxon>
        <taxon>Bacillota</taxon>
        <taxon>Bacilli</taxon>
        <taxon>Bacillales</taxon>
        <taxon>Bacillaceae</taxon>
        <taxon>Bacillus</taxon>
        <taxon>Bacillus cereus group</taxon>
    </lineage>
</organism>
<protein>
    <recommendedName>
        <fullName evidence="1">Small ribosomal subunit protein uS2</fullName>
    </recommendedName>
    <alternativeName>
        <fullName evidence="2">30S ribosomal protein S2</fullName>
    </alternativeName>
</protein>
<evidence type="ECO:0000255" key="1">
    <source>
        <dbReference type="HAMAP-Rule" id="MF_00291"/>
    </source>
</evidence>
<evidence type="ECO:0000305" key="2"/>
<sequence length="233" mass="26465">MSVISMKQLLEAGVHFGHQTRRWNPKMKRYIFTERNGIYIIDLQKTVKKVEEAFNVMRNIAAEGGDILFVGTKKQAQEAIKEEATRAGMYFVNQRWLGGTLTNFQTIQKRIKRLKDIERMQEDGTFDVLPKKEVVQLKKELERLEKFLGGIKDMKGLPSALFVVDPRKERIAVAEARKLNIPIIGIVDTNCDPDEIDHVIPANDDAIRAVKLLTSKMADAILEAKQGEETVTA</sequence>
<name>RS2_BACCN</name>
<keyword id="KW-0687">Ribonucleoprotein</keyword>
<keyword id="KW-0689">Ribosomal protein</keyword>
<dbReference type="EMBL" id="CP000764">
    <property type="protein sequence ID" value="ABS22715.1"/>
    <property type="molecule type" value="Genomic_DNA"/>
</dbReference>
<dbReference type="RefSeq" id="WP_012094919.1">
    <property type="nucleotide sequence ID" value="NC_009674.1"/>
</dbReference>
<dbReference type="SMR" id="A7GRF7"/>
<dbReference type="STRING" id="315749.Bcer98_2479"/>
<dbReference type="GeneID" id="33897734"/>
<dbReference type="KEGG" id="bcy:Bcer98_2479"/>
<dbReference type="eggNOG" id="COG0052">
    <property type="taxonomic scope" value="Bacteria"/>
</dbReference>
<dbReference type="HOGENOM" id="CLU_040318_1_2_9"/>
<dbReference type="OrthoDB" id="9808036at2"/>
<dbReference type="Proteomes" id="UP000002300">
    <property type="component" value="Chromosome"/>
</dbReference>
<dbReference type="GO" id="GO:0022627">
    <property type="term" value="C:cytosolic small ribosomal subunit"/>
    <property type="evidence" value="ECO:0007669"/>
    <property type="project" value="TreeGrafter"/>
</dbReference>
<dbReference type="GO" id="GO:0003735">
    <property type="term" value="F:structural constituent of ribosome"/>
    <property type="evidence" value="ECO:0007669"/>
    <property type="project" value="InterPro"/>
</dbReference>
<dbReference type="GO" id="GO:0006412">
    <property type="term" value="P:translation"/>
    <property type="evidence" value="ECO:0007669"/>
    <property type="project" value="UniProtKB-UniRule"/>
</dbReference>
<dbReference type="CDD" id="cd01425">
    <property type="entry name" value="RPS2"/>
    <property type="match status" value="1"/>
</dbReference>
<dbReference type="FunFam" id="1.10.287.610:FF:000001">
    <property type="entry name" value="30S ribosomal protein S2"/>
    <property type="match status" value="1"/>
</dbReference>
<dbReference type="Gene3D" id="3.40.50.10490">
    <property type="entry name" value="Glucose-6-phosphate isomerase like protein, domain 1"/>
    <property type="match status" value="1"/>
</dbReference>
<dbReference type="Gene3D" id="1.10.287.610">
    <property type="entry name" value="Helix hairpin bin"/>
    <property type="match status" value="1"/>
</dbReference>
<dbReference type="HAMAP" id="MF_00291_B">
    <property type="entry name" value="Ribosomal_uS2_B"/>
    <property type="match status" value="1"/>
</dbReference>
<dbReference type="InterPro" id="IPR001865">
    <property type="entry name" value="Ribosomal_uS2"/>
</dbReference>
<dbReference type="InterPro" id="IPR005706">
    <property type="entry name" value="Ribosomal_uS2_bac/mit/plastid"/>
</dbReference>
<dbReference type="InterPro" id="IPR018130">
    <property type="entry name" value="Ribosomal_uS2_CS"/>
</dbReference>
<dbReference type="InterPro" id="IPR023591">
    <property type="entry name" value="Ribosomal_uS2_flav_dom_sf"/>
</dbReference>
<dbReference type="NCBIfam" id="TIGR01011">
    <property type="entry name" value="rpsB_bact"/>
    <property type="match status" value="1"/>
</dbReference>
<dbReference type="PANTHER" id="PTHR12534">
    <property type="entry name" value="30S RIBOSOMAL PROTEIN S2 PROKARYOTIC AND ORGANELLAR"/>
    <property type="match status" value="1"/>
</dbReference>
<dbReference type="PANTHER" id="PTHR12534:SF0">
    <property type="entry name" value="SMALL RIBOSOMAL SUBUNIT PROTEIN US2M"/>
    <property type="match status" value="1"/>
</dbReference>
<dbReference type="Pfam" id="PF00318">
    <property type="entry name" value="Ribosomal_S2"/>
    <property type="match status" value="1"/>
</dbReference>
<dbReference type="PRINTS" id="PR00395">
    <property type="entry name" value="RIBOSOMALS2"/>
</dbReference>
<dbReference type="SUPFAM" id="SSF52313">
    <property type="entry name" value="Ribosomal protein S2"/>
    <property type="match status" value="1"/>
</dbReference>
<dbReference type="PROSITE" id="PS00962">
    <property type="entry name" value="RIBOSOMAL_S2_1"/>
    <property type="match status" value="1"/>
</dbReference>
<dbReference type="PROSITE" id="PS00963">
    <property type="entry name" value="RIBOSOMAL_S2_2"/>
    <property type="match status" value="1"/>
</dbReference>
<gene>
    <name evidence="1" type="primary">rpsB</name>
    <name type="ordered locus">Bcer98_2479</name>
</gene>